<keyword id="KW-0903">Direct protein sequencing</keyword>
<keyword id="KW-1015">Disulfide bond</keyword>
<keyword id="KW-0872">Ion channel impairing toxin</keyword>
<keyword id="KW-0632">Potassium channel impairing toxin</keyword>
<keyword id="KW-0646">Protease inhibitor</keyword>
<keyword id="KW-0964">Secreted</keyword>
<keyword id="KW-0722">Serine protease inhibitor</keyword>
<keyword id="KW-0800">Toxin</keyword>
<keyword id="KW-1220">Voltage-gated potassium channel impairing toxin</keyword>
<accession>P24541</accession>
<sequence length="62" mass="6772">FCYLPDDPGVCKAHIPRFYYNPASNKCKNFIYGGCGGNANNFETRAECRHTCVASGKGGPRP</sequence>
<dbReference type="PIR" id="S19327">
    <property type="entry name" value="S19327"/>
</dbReference>
<dbReference type="SMR" id="P24541"/>
<dbReference type="MEROPS" id="I02.062"/>
<dbReference type="GO" id="GO:0005615">
    <property type="term" value="C:extracellular space"/>
    <property type="evidence" value="ECO:0007669"/>
    <property type="project" value="TreeGrafter"/>
</dbReference>
<dbReference type="GO" id="GO:0015459">
    <property type="term" value="F:potassium channel regulator activity"/>
    <property type="evidence" value="ECO:0007669"/>
    <property type="project" value="UniProtKB-KW"/>
</dbReference>
<dbReference type="GO" id="GO:0004867">
    <property type="term" value="F:serine-type endopeptidase inhibitor activity"/>
    <property type="evidence" value="ECO:0007669"/>
    <property type="project" value="UniProtKB-KW"/>
</dbReference>
<dbReference type="GO" id="GO:0090729">
    <property type="term" value="F:toxin activity"/>
    <property type="evidence" value="ECO:0007669"/>
    <property type="project" value="UniProtKB-KW"/>
</dbReference>
<dbReference type="CDD" id="cd22608">
    <property type="entry name" value="Kunitz_PPTI-like"/>
    <property type="match status" value="1"/>
</dbReference>
<dbReference type="FunFam" id="4.10.410.10:FF:000021">
    <property type="entry name" value="Serine protease inhibitor, putative"/>
    <property type="match status" value="1"/>
</dbReference>
<dbReference type="Gene3D" id="4.10.410.10">
    <property type="entry name" value="Pancreatic trypsin inhibitor Kunitz domain"/>
    <property type="match status" value="1"/>
</dbReference>
<dbReference type="InterPro" id="IPR002223">
    <property type="entry name" value="Kunitz_BPTI"/>
</dbReference>
<dbReference type="InterPro" id="IPR036880">
    <property type="entry name" value="Kunitz_BPTI_sf"/>
</dbReference>
<dbReference type="InterPro" id="IPR020901">
    <property type="entry name" value="Prtase_inh_Kunz-CS"/>
</dbReference>
<dbReference type="InterPro" id="IPR050098">
    <property type="entry name" value="TFPI/VKTCI-like"/>
</dbReference>
<dbReference type="PANTHER" id="PTHR10083:SF374">
    <property type="entry name" value="BPTI_KUNITZ INHIBITOR DOMAIN-CONTAINING PROTEIN"/>
    <property type="match status" value="1"/>
</dbReference>
<dbReference type="PANTHER" id="PTHR10083">
    <property type="entry name" value="KUNITZ-TYPE PROTEASE INHIBITOR-RELATED"/>
    <property type="match status" value="1"/>
</dbReference>
<dbReference type="Pfam" id="PF00014">
    <property type="entry name" value="Kunitz_BPTI"/>
    <property type="match status" value="1"/>
</dbReference>
<dbReference type="PRINTS" id="PR00759">
    <property type="entry name" value="BASICPTASE"/>
</dbReference>
<dbReference type="SMART" id="SM00131">
    <property type="entry name" value="KU"/>
    <property type="match status" value="1"/>
</dbReference>
<dbReference type="SUPFAM" id="SSF57362">
    <property type="entry name" value="BPTI-like"/>
    <property type="match status" value="1"/>
</dbReference>
<dbReference type="PROSITE" id="PS00280">
    <property type="entry name" value="BPTI_KUNITZ_1"/>
    <property type="match status" value="1"/>
</dbReference>
<dbReference type="PROSITE" id="PS50279">
    <property type="entry name" value="BPTI_KUNITZ_2"/>
    <property type="match status" value="1"/>
</dbReference>
<proteinExistence type="evidence at protein level"/>
<protein>
    <recommendedName>
        <fullName evidence="5">Kunitz-type serine protease inhibitor</fullName>
    </recommendedName>
    <alternativeName>
        <fullName evidence="5 6">Venom trypsin inhibitor</fullName>
    </alternativeName>
</protein>
<reference key="1">
    <citation type="journal article" date="1991" name="FEBS Lett.">
        <title>Purification and characterization of a Kunitz-type trypsin inhibitor from Leaf-nosed viper venom.</title>
        <authorList>
            <person name="Siddiqi A.R."/>
            <person name="Zaidi Z.H."/>
            <person name="Joernvall H."/>
        </authorList>
    </citation>
    <scope>PROTEIN SEQUENCE</scope>
    <scope>SUBCELLULAR LOCATION</scope>
    <source>
        <tissue>Venom</tissue>
    </source>
</reference>
<reference key="2">
    <citation type="journal article" date="2019" name="Biochem. Biophys. Res. Commun.">
        <title>Identification of novel Kv1.3 targeting venom peptides by a single round of autocrine-based selection.</title>
        <authorList>
            <person name="Liu Y."/>
            <person name="Zhang J."/>
            <person name="Wang R."/>
            <person name="Wu Y."/>
            <person name="Wang W."/>
            <person name="Xin X."/>
            <person name="Du M."/>
            <person name="Cao Y."/>
            <person name="Zhang H."/>
        </authorList>
    </citation>
    <scope>FUNCTION</scope>
    <scope>RECOMBINANT EXPRESSION</scope>
</reference>
<organism>
    <name type="scientific">Eristicophis macmahoni</name>
    <name type="common">Leaf-nosed viper</name>
    <dbReference type="NCBI Taxonomy" id="110227"/>
    <lineage>
        <taxon>Eukaryota</taxon>
        <taxon>Metazoa</taxon>
        <taxon>Chordata</taxon>
        <taxon>Craniata</taxon>
        <taxon>Vertebrata</taxon>
        <taxon>Euteleostomi</taxon>
        <taxon>Lepidosauria</taxon>
        <taxon>Squamata</taxon>
        <taxon>Bifurcata</taxon>
        <taxon>Unidentata</taxon>
        <taxon>Episquamata</taxon>
        <taxon>Toxicofera</taxon>
        <taxon>Serpentes</taxon>
        <taxon>Colubroidea</taxon>
        <taxon>Viperidae</taxon>
        <taxon>Viperinae</taxon>
        <taxon>Eristicophis</taxon>
    </lineage>
</organism>
<feature type="chain" id="PRO_0000155437" description="Kunitz-type serine protease inhibitor" evidence="3">
    <location>
        <begin position="1"/>
        <end position="62"/>
    </location>
</feature>
<feature type="domain" description="BPTI/Kunitz inhibitor" evidence="2">
    <location>
        <begin position="2"/>
        <end position="52"/>
    </location>
</feature>
<feature type="site" description="Reactive bond for trypsin" evidence="1">
    <location>
        <begin position="12"/>
        <end position="13"/>
    </location>
</feature>
<feature type="disulfide bond" evidence="2">
    <location>
        <begin position="2"/>
        <end position="52"/>
    </location>
</feature>
<feature type="disulfide bond" evidence="2">
    <location>
        <begin position="11"/>
        <end position="35"/>
    </location>
</feature>
<feature type="disulfide bond" evidence="2">
    <location>
        <begin position="27"/>
        <end position="48"/>
    </location>
</feature>
<comment type="function">
    <text evidence="3 4">Serine protease inhibitor that inhibits trypsin (PubMed:1743283). The recombinant protein also barely blocks voltage-gated potassium channel Kv1.3/KCNA3 (3.70% inhibition at 60 nM of toxin) (PubMed:30648553).</text>
</comment>
<comment type="subcellular location">
    <subcellularLocation>
        <location evidence="3">Secreted</location>
    </subcellularLocation>
</comment>
<comment type="tissue specificity">
    <text evidence="7">Expressed by the venom gland.</text>
</comment>
<comment type="similarity">
    <text evidence="6">Belongs to the venom Kunitz-type family.</text>
</comment>
<evidence type="ECO:0000250" key="1"/>
<evidence type="ECO:0000255" key="2">
    <source>
        <dbReference type="PROSITE-ProRule" id="PRU00031"/>
    </source>
</evidence>
<evidence type="ECO:0000269" key="3">
    <source>
    </source>
</evidence>
<evidence type="ECO:0000269" key="4">
    <source>
    </source>
</evidence>
<evidence type="ECO:0000303" key="5">
    <source>
    </source>
</evidence>
<evidence type="ECO:0000305" key="6"/>
<evidence type="ECO:0000305" key="7">
    <source>
    </source>
</evidence>
<name>VKT_ERIMA</name>